<name>CUPN2_RHOJR</name>
<evidence type="ECO:0000269" key="1">
    <source>
    </source>
</evidence>
<evidence type="ECO:0000269" key="2">
    <source ref="3"/>
</evidence>
<evidence type="ECO:0000303" key="3">
    <source>
    </source>
</evidence>
<evidence type="ECO:0000305" key="4"/>
<evidence type="ECO:0000312" key="5">
    <source>
        <dbReference type="EMBL" id="ABG99696.1"/>
    </source>
</evidence>
<evidence type="ECO:0000312" key="6">
    <source>
        <dbReference type="Proteomes" id="UP000008710"/>
    </source>
</evidence>
<evidence type="ECO:0007744" key="7">
    <source>
        <dbReference type="PDB" id="5UQP"/>
    </source>
</evidence>
<evidence type="ECO:0007829" key="8">
    <source>
        <dbReference type="PDB" id="5UQP"/>
    </source>
</evidence>
<sequence length="122" mass="13586">MTTDSVTQGVAHSVNGRLPELDFENRPSGAKLGIFDLPKLEVSVAPFTLAHIRVPGGVTTAEDHHEVREIWLVQSGSGILTLDGVRSRVRAGDTLYYESYRRHQLHNDGDSPVEIVSIWWRP</sequence>
<keyword id="KW-0002">3D-structure</keyword>
<keyword id="KW-0479">Metal-binding</keyword>
<keyword id="KW-0614">Plasmid</keyword>
<keyword id="KW-0862">Zinc</keyword>
<organism evidence="6">
    <name type="scientific">Rhodococcus jostii (strain RHA1)</name>
    <dbReference type="NCBI Taxonomy" id="101510"/>
    <lineage>
        <taxon>Bacteria</taxon>
        <taxon>Bacillati</taxon>
        <taxon>Actinomycetota</taxon>
        <taxon>Actinomycetes</taxon>
        <taxon>Mycobacteriales</taxon>
        <taxon>Nocardiaceae</taxon>
        <taxon>Rhodococcus</taxon>
    </lineage>
</organism>
<protein>
    <recommendedName>
        <fullName evidence="4">Cupin 2 conserved barrel domain-containing protein</fullName>
    </recommendedName>
    <alternativeName>
        <fullName evidence="4">Cupin domain-containing protein</fullName>
    </alternativeName>
    <alternativeName>
        <fullName evidence="3">RHS1</fullName>
    </alternativeName>
</protein>
<gene>
    <name evidence="5" type="ordered locus">RHA1_ro08652</name>
</gene>
<dbReference type="EMBL" id="CP000432">
    <property type="protein sequence ID" value="ABG99696.1"/>
    <property type="molecule type" value="Genomic_DNA"/>
</dbReference>
<dbReference type="RefSeq" id="WP_007299751.1">
    <property type="nucleotide sequence ID" value="NC_008269.1"/>
</dbReference>
<dbReference type="PDB" id="5UQP">
    <property type="method" value="X-ray"/>
    <property type="resolution" value="2.40 A"/>
    <property type="chains" value="A/B=1-122"/>
</dbReference>
<dbReference type="PDBsum" id="5UQP"/>
<dbReference type="SMR" id="Q0RYE0"/>
<dbReference type="KEGG" id="rha:RHA1_ro08652"/>
<dbReference type="PATRIC" id="fig|101510.16.peg.7997"/>
<dbReference type="HOGENOM" id="CLU_164773_0_0_11"/>
<dbReference type="OrthoDB" id="5243731at2"/>
<dbReference type="Proteomes" id="UP000008710">
    <property type="component" value="Plasmid pRHL1"/>
</dbReference>
<dbReference type="GO" id="GO:0046872">
    <property type="term" value="F:metal ion binding"/>
    <property type="evidence" value="ECO:0007669"/>
    <property type="project" value="UniProtKB-KW"/>
</dbReference>
<dbReference type="CDD" id="cd06988">
    <property type="entry name" value="cupin_DddK"/>
    <property type="match status" value="1"/>
</dbReference>
<dbReference type="Gene3D" id="2.60.120.10">
    <property type="entry name" value="Jelly Rolls"/>
    <property type="match status" value="1"/>
</dbReference>
<dbReference type="InterPro" id="IPR013096">
    <property type="entry name" value="Cupin_2"/>
</dbReference>
<dbReference type="InterPro" id="IPR051610">
    <property type="entry name" value="GPI/OXD"/>
</dbReference>
<dbReference type="InterPro" id="IPR014710">
    <property type="entry name" value="RmlC-like_jellyroll"/>
</dbReference>
<dbReference type="InterPro" id="IPR011051">
    <property type="entry name" value="RmlC_Cupin_sf"/>
</dbReference>
<dbReference type="PANTHER" id="PTHR35848:SF6">
    <property type="entry name" value="CUPIN TYPE-2 DOMAIN-CONTAINING PROTEIN"/>
    <property type="match status" value="1"/>
</dbReference>
<dbReference type="PANTHER" id="PTHR35848">
    <property type="entry name" value="OXALATE-BINDING PROTEIN"/>
    <property type="match status" value="1"/>
</dbReference>
<dbReference type="Pfam" id="PF07883">
    <property type="entry name" value="Cupin_2"/>
    <property type="match status" value="1"/>
</dbReference>
<dbReference type="SUPFAM" id="SSF51182">
    <property type="entry name" value="RmlC-like cupins"/>
    <property type="match status" value="1"/>
</dbReference>
<feature type="chain" id="PRO_0000458352" description="Cupin 2 conserved barrel domain-containing protein">
    <location>
        <begin position="1"/>
        <end position="122"/>
    </location>
</feature>
<feature type="region of interest" description="Cupin 2 conserved barrel" evidence="3">
    <location>
        <begin position="55"/>
        <end position="119"/>
    </location>
</feature>
<feature type="binding site" evidence="2 7">
    <location>
        <position position="63"/>
    </location>
    <ligand>
        <name>Zn(2+)</name>
        <dbReference type="ChEBI" id="CHEBI:29105"/>
    </ligand>
</feature>
<feature type="binding site" evidence="1 2 7">
    <location>
        <position position="65"/>
    </location>
    <ligand>
        <name>Zn(2+)</name>
        <dbReference type="ChEBI" id="CHEBI:29105"/>
    </ligand>
</feature>
<feature type="binding site" evidence="2 7">
    <location>
        <position position="69"/>
    </location>
    <ligand>
        <name>Zn(2+)</name>
        <dbReference type="ChEBI" id="CHEBI:29105"/>
    </ligand>
</feature>
<feature type="binding site" evidence="1 2 7">
    <location>
        <position position="103"/>
    </location>
    <ligand>
        <name>Zn(2+)</name>
        <dbReference type="ChEBI" id="CHEBI:29105"/>
    </ligand>
</feature>
<feature type="mutagenesis site" description="No impact on hydrazine bond formation." evidence="1">
    <original>R</original>
    <variation>A</variation>
    <location>
        <position position="26"/>
    </location>
</feature>
<feature type="mutagenesis site" description="No impact on hydrazine bond formation." evidence="1">
    <original>S</original>
    <variation>A</variation>
    <location>
        <position position="28"/>
    </location>
</feature>
<feature type="mutagenesis site" description="No impact on hydrazine bond formation." evidence="1">
    <original>L</original>
    <variation>A</variation>
    <location>
        <position position="32"/>
    </location>
</feature>
<feature type="mutagenesis site" description="Failure to catalyze hydrazine bond formation. No impact on zinc-binding ability." evidence="1">
    <original>D</original>
    <variation>A</variation>
    <location>
        <position position="63"/>
    </location>
</feature>
<feature type="mutagenesis site" description="Failure to catalyze hydrazine bond formation. Loss of zinc-binding ability." evidence="1">
    <original>H</original>
    <variation>A</variation>
    <location>
        <position position="65"/>
    </location>
</feature>
<feature type="mutagenesis site" description="No impact on hydrazine bond formation." evidence="1">
    <original>V</original>
    <variation>A</variation>
    <location>
        <position position="67"/>
    </location>
</feature>
<feature type="mutagenesis site" description="Failure to catalyze hydrazine bond formation. No impact on zinc-binding ability." evidence="1">
    <original>E</original>
    <variation>A</variation>
    <location>
        <position position="69"/>
    </location>
</feature>
<feature type="mutagenesis site" description="Failure to catalyze hydrazine bond formation. Loss of zinc-binding ability." evidence="1">
    <original>H</original>
    <variation>A</variation>
    <location>
        <position position="103"/>
    </location>
</feature>
<feature type="mutagenesis site" description="No impact on hydrazine bond formation." evidence="1">
    <original>W</original>
    <variation>A</variation>
    <location>
        <position position="119"/>
    </location>
</feature>
<feature type="strand" evidence="8">
    <location>
        <begin position="23"/>
        <end position="25"/>
    </location>
</feature>
<feature type="strand" evidence="8">
    <location>
        <begin position="31"/>
        <end position="34"/>
    </location>
</feature>
<feature type="strand" evidence="8">
    <location>
        <begin position="39"/>
        <end position="54"/>
    </location>
</feature>
<feature type="strand" evidence="8">
    <location>
        <begin position="66"/>
        <end position="75"/>
    </location>
</feature>
<feature type="strand" evidence="8">
    <location>
        <begin position="77"/>
        <end position="82"/>
    </location>
</feature>
<feature type="strand" evidence="8">
    <location>
        <begin position="85"/>
        <end position="90"/>
    </location>
</feature>
<feature type="strand" evidence="8">
    <location>
        <begin position="94"/>
        <end position="97"/>
    </location>
</feature>
<feature type="strand" evidence="8">
    <location>
        <begin position="103"/>
        <end position="106"/>
    </location>
</feature>
<feature type="strand" evidence="8">
    <location>
        <begin position="109"/>
        <end position="111"/>
    </location>
</feature>
<feature type="strand" evidence="8">
    <location>
        <begin position="113"/>
        <end position="120"/>
    </location>
</feature>
<comment type="function">
    <text evidence="1">Catalyzes hydrazine (N-N) bond formation from an unstable ester intermediate, the product of the ATP-dependent condensation of L-N(6)-OH-lysine and L-glutamine substrates by a methionyl-tRNA synthase-like protein.</text>
</comment>
<comment type="catalytic activity">
    <reaction evidence="1">
        <text>N(6)-hydroxy-L-lysine + L-glutamate + ATP = 1-L-glutamo-2-N(6-)L-lysinohydrazine + AMP + diphosphate + 2 H(+)</text>
        <dbReference type="Rhea" id="RHEA:76387"/>
        <dbReference type="ChEBI" id="CHEBI:15378"/>
        <dbReference type="ChEBI" id="CHEBI:29985"/>
        <dbReference type="ChEBI" id="CHEBI:30616"/>
        <dbReference type="ChEBI" id="CHEBI:33019"/>
        <dbReference type="ChEBI" id="CHEBI:57820"/>
        <dbReference type="ChEBI" id="CHEBI:195186"/>
        <dbReference type="ChEBI" id="CHEBI:456215"/>
    </reaction>
</comment>
<comment type="cofactor">
    <cofactor evidence="1">
        <name>Zn(2+)</name>
        <dbReference type="ChEBI" id="CHEBI:29105"/>
    </cofactor>
</comment>
<comment type="activity regulation">
    <text evidence="1">Inhibited by 1,10-phenanthroline (OP).</text>
</comment>
<comment type="biotechnology">
    <text evidence="3">May facilitate future development of novel N-N forming biocatalysts.</text>
</comment>
<geneLocation type="plasmid" evidence="6">
    <name>pRHL1</name>
</geneLocation>
<proteinExistence type="evidence at protein level"/>
<reference evidence="6" key="1">
    <citation type="journal article" date="2006" name="Proc. Natl. Acad. Sci. U.S.A.">
        <title>The complete genome of Rhodococcus sp. RHA1 provides insights into a catabolic powerhouse.</title>
        <authorList>
            <person name="McLeod M.P."/>
            <person name="Warren R.L."/>
            <person name="Hsiao W.W.L."/>
            <person name="Araki N."/>
            <person name="Myhre M."/>
            <person name="Fernandes C."/>
            <person name="Miyazawa D."/>
            <person name="Wong W."/>
            <person name="Lillquist A.L."/>
            <person name="Wang D."/>
            <person name="Dosanjh M."/>
            <person name="Hara H."/>
            <person name="Petrescu A."/>
            <person name="Morin R.D."/>
            <person name="Yang G."/>
            <person name="Stott J.M."/>
            <person name="Schein J.E."/>
            <person name="Shin H."/>
            <person name="Smailus D."/>
            <person name="Siddiqui A.S."/>
            <person name="Marra M.A."/>
            <person name="Jones S.J.M."/>
            <person name="Holt R."/>
            <person name="Brinkman F.S.L."/>
            <person name="Miyauchi K."/>
            <person name="Fukuda M."/>
            <person name="Davies J.E."/>
            <person name="Mohn W.W."/>
            <person name="Eltis L.D."/>
        </authorList>
    </citation>
    <scope>NUCLEOTIDE SEQUENCE [LARGE SCALE GENOMIC DNA]</scope>
    <source>
        <strain evidence="6">RHA1</strain>
    </source>
</reference>
<reference evidence="4" key="2">
    <citation type="journal article" date="2021" name="Nat. Commun.">
        <title>Molecular basis of enzymatic nitrogen-nitrogen formation by a family of zinc-binding cupin enzymes.</title>
        <authorList>
            <person name="Zhao G."/>
            <person name="Peng W."/>
            <person name="Song K."/>
            <person name="Shi J."/>
            <person name="Lu X."/>
            <person name="Wang B."/>
            <person name="Du Y.L."/>
        </authorList>
    </citation>
    <scope>FUNCTION</scope>
    <scope>CATALYTIC ACTIVITY</scope>
    <scope>COFACTOR</scope>
    <scope>ACTIVITY REGULATION</scope>
    <scope>BIOTECHNOLOGY</scope>
    <scope>ZINC BINDING</scope>
    <scope>MUTAGENESIS OF ARG-26; SER-28; LEU-32; ILE-52; THR-60; ASP-63; HIS-65; VAL-67; GLU-69; TRP-71; HIS-103 AND TRP-119</scope>
</reference>
<reference evidence="7" key="3">
    <citation type="submission" date="2017-02" db="PDB data bank">
        <title>The crystal structure of cupin protein from Rhodococcus jostii RHA1.</title>
        <authorList>
            <person name="Tan K."/>
            <person name="Li H."/>
            <person name="Clancy S."/>
            <person name="Phillips G.N."/>
            <person name="Joachimiak A."/>
        </authorList>
    </citation>
    <scope>X-RAY CRYSTALLOGRAPHY (2.40 ANGSTROMS) IN COMPLEX WITH ZINC</scope>
</reference>
<accession>Q0RYE0</accession>